<protein>
    <recommendedName>
        <fullName>RNA silencing suppressor p19</fullName>
    </recommendedName>
    <alternativeName>
        <fullName>19 kDa symptom severity modulator</fullName>
    </alternativeName>
</protein>
<gene>
    <name type="ORF">ORF4</name>
</gene>
<name>P19_CIRV</name>
<keyword id="KW-0002">3D-structure</keyword>
<keyword id="KW-0945">Host-virus interaction</keyword>
<keyword id="KW-1090">Inhibition of host innate immune response by virus</keyword>
<keyword id="KW-0694">RNA-binding</keyword>
<keyword id="KW-0941">Suppressor of RNA silencing</keyword>
<keyword id="KW-0899">Viral immunoevasion</keyword>
<dbReference type="EMBL" id="X85215">
    <property type="protein sequence ID" value="CAA59481.1"/>
    <property type="molecule type" value="Genomic_RNA"/>
</dbReference>
<dbReference type="PDB" id="1RPU">
    <property type="method" value="X-ray"/>
    <property type="resolution" value="2.50 A"/>
    <property type="chains" value="A/B=1-172"/>
</dbReference>
<dbReference type="PDB" id="6BJG">
    <property type="method" value="X-ray"/>
    <property type="resolution" value="2.29 A"/>
    <property type="chains" value="A/B=1-172"/>
</dbReference>
<dbReference type="PDB" id="6BJH">
    <property type="method" value="X-ray"/>
    <property type="resolution" value="2.58 A"/>
    <property type="chains" value="A/B=1-172"/>
</dbReference>
<dbReference type="PDB" id="6BJV">
    <property type="method" value="X-ray"/>
    <property type="resolution" value="2.20 A"/>
    <property type="chains" value="A/B=1-172"/>
</dbReference>
<dbReference type="PDBsum" id="1RPU"/>
<dbReference type="PDBsum" id="6BJG"/>
<dbReference type="PDBsum" id="6BJH"/>
<dbReference type="PDBsum" id="6BJV"/>
<dbReference type="SMR" id="Q66104"/>
<dbReference type="KEGG" id="vg:935442"/>
<dbReference type="OrthoDB" id="10507at10239"/>
<dbReference type="EvolutionaryTrace" id="Q66104"/>
<dbReference type="Proteomes" id="UP000201384">
    <property type="component" value="Genome"/>
</dbReference>
<dbReference type="GO" id="GO:0044423">
    <property type="term" value="C:virion component"/>
    <property type="evidence" value="ECO:0007669"/>
    <property type="project" value="InterPro"/>
</dbReference>
<dbReference type="GO" id="GO:0003723">
    <property type="term" value="F:RNA binding"/>
    <property type="evidence" value="ECO:0007669"/>
    <property type="project" value="UniProtKB-KW"/>
</dbReference>
<dbReference type="GO" id="GO:0052170">
    <property type="term" value="P:symbiont-mediated suppression of host innate immune response"/>
    <property type="evidence" value="ECO:0007669"/>
    <property type="project" value="UniProtKB-KW"/>
</dbReference>
<dbReference type="Gene3D" id="3.30.390.180">
    <property type="entry name" value="RNA silencing suppressor P19"/>
    <property type="match status" value="1"/>
</dbReference>
<dbReference type="InterPro" id="IPR004905">
    <property type="entry name" value="Tombusvirus_p19"/>
</dbReference>
<dbReference type="InterPro" id="IPR036131">
    <property type="entry name" value="VP19_sf"/>
</dbReference>
<dbReference type="Pfam" id="PF03220">
    <property type="entry name" value="Tombus_P19"/>
    <property type="match status" value="1"/>
</dbReference>
<dbReference type="SUPFAM" id="SSF103145">
    <property type="entry name" value="Tombusvirus P19 core protein, VP19"/>
    <property type="match status" value="1"/>
</dbReference>
<proteinExistence type="evidence at protein level"/>
<evidence type="ECO:0000256" key="1">
    <source>
        <dbReference type="SAM" id="MobiDB-lite"/>
    </source>
</evidence>
<evidence type="ECO:0000269" key="2">
    <source>
    </source>
</evidence>
<evidence type="ECO:0000269" key="3">
    <source>
    </source>
</evidence>
<evidence type="ECO:0000305" key="4"/>
<evidence type="ECO:0007829" key="5">
    <source>
        <dbReference type="PDB" id="1RPU"/>
    </source>
</evidence>
<evidence type="ECO:0007829" key="6">
    <source>
        <dbReference type="PDB" id="6BJG"/>
    </source>
</evidence>
<evidence type="ECO:0007829" key="7">
    <source>
        <dbReference type="PDB" id="6BJV"/>
    </source>
</evidence>
<comment type="function">
    <text evidence="2 3">Acts as a suppressor of RNA-mediated gene silencing, also known as post-transcriptional gene silencing (PTGS), a mechanism of plant viral defense that limits the accumulation of viral RNAs. Binds to short interfering RNAs (siRNAs) with high affinity. Acts as a molecular caliper to specifically select siRNAs based on the length of the duplex region of the RNA.</text>
</comment>
<comment type="subunit">
    <text>Homodimer.</text>
</comment>
<comment type="similarity">
    <text evidence="4">Belongs to the tombusvirus protein p19 family.</text>
</comment>
<accession>Q66104</accession>
<organismHost>
    <name type="scientific">Dianthus caryophyllus</name>
    <name type="common">Carnation</name>
    <name type="synonym">Clove pink</name>
    <dbReference type="NCBI Taxonomy" id="3570"/>
</organismHost>
<reference key="1">
    <citation type="journal article" date="1995" name="Arch. Virol.">
        <title>Molecular cloning and complete nucleotide sequence of carnation Italian ringspot tombusvirus genomic and defective interfering RNAs.</title>
        <authorList>
            <person name="Rubino L."/>
            <person name="Burgyan J."/>
            <person name="Russo M."/>
        </authorList>
    </citation>
    <scope>NUCLEOTIDE SEQUENCE [GENOMIC RNA]</scope>
</reference>
<reference key="2">
    <citation type="journal article" date="2009" name="Biophys. J.">
        <title>Recognition mechanism of siRNA by viral p19 suppressor of RNA silencing: a molecular dynamics study.</title>
        <authorList>
            <person name="Xia Z."/>
            <person name="Zhu Z."/>
            <person name="Zhu J."/>
            <person name="Zhou R."/>
        </authorList>
    </citation>
    <scope>FUNCTION</scope>
    <scope>MUTAGENESIS OF TRP-39 AND TRP-42</scope>
</reference>
<reference key="3">
    <citation type="journal article" date="2003" name="Cell">
        <title>Size selective recognition of siRNA by an RNA silencing suppressor.</title>
        <authorList>
            <person name="Vargason J.M."/>
            <person name="Szittya G."/>
            <person name="Burgyan J."/>
            <person name="Tanaka Hall T.M."/>
        </authorList>
    </citation>
    <scope>X-RAY CRYSTALLOGRAPHY (2.5 ANGSTROMS)</scope>
    <scope>FUNCTION</scope>
</reference>
<organism>
    <name type="scientific">Carnation Italian ringspot virus</name>
    <name type="common">CIRV</name>
    <dbReference type="NCBI Taxonomy" id="39443"/>
    <lineage>
        <taxon>Viruses</taxon>
        <taxon>Riboviria</taxon>
        <taxon>Orthornavirae</taxon>
        <taxon>Kitrinoviricota</taxon>
        <taxon>Tolucaviricetes</taxon>
        <taxon>Tolivirales</taxon>
        <taxon>Tombusviridae</taxon>
        <taxon>Procedovirinae</taxon>
        <taxon>Tombusvirus</taxon>
        <taxon>Tombusvirus dianthi</taxon>
    </lineage>
</organism>
<feature type="chain" id="PRO_0000222872" description="RNA silencing suppressor p19">
    <location>
        <begin position="1"/>
        <end position="172"/>
    </location>
</feature>
<feature type="region of interest" description="Disordered" evidence="1">
    <location>
        <begin position="1"/>
        <end position="27"/>
    </location>
</feature>
<feature type="compositionally biased region" description="Basic and acidic residues" evidence="1">
    <location>
        <begin position="1"/>
        <end position="20"/>
    </location>
</feature>
<feature type="mutagenesis site" description="Complete loss of silencing suppression." evidence="3">
    <original>W</original>
    <variation>G</variation>
    <location>
        <position position="39"/>
    </location>
</feature>
<feature type="mutagenesis site" description="Complete loss of silencing suppression." evidence="3">
    <original>W</original>
    <variation>G</variation>
    <location>
        <position position="42"/>
    </location>
</feature>
<feature type="strand" evidence="7">
    <location>
        <begin position="4"/>
        <end position="6"/>
    </location>
</feature>
<feature type="helix" evidence="7">
    <location>
        <begin position="7"/>
        <end position="16"/>
    </location>
</feature>
<feature type="turn" evidence="7">
    <location>
        <begin position="17"/>
        <end position="19"/>
    </location>
</feature>
<feature type="strand" evidence="6">
    <location>
        <begin position="22"/>
        <end position="24"/>
    </location>
</feature>
<feature type="strand" evidence="5">
    <location>
        <begin position="29"/>
        <end position="32"/>
    </location>
</feature>
<feature type="helix" evidence="7">
    <location>
        <begin position="39"/>
        <end position="45"/>
    </location>
</feature>
<feature type="strand" evidence="7">
    <location>
        <begin position="52"/>
        <end position="55"/>
    </location>
</feature>
<feature type="strand" evidence="7">
    <location>
        <begin position="57"/>
        <end position="65"/>
    </location>
</feature>
<feature type="strand" evidence="7">
    <location>
        <begin position="68"/>
        <end position="75"/>
    </location>
</feature>
<feature type="helix" evidence="7">
    <location>
        <begin position="80"/>
        <end position="87"/>
    </location>
</feature>
<feature type="helix" evidence="7">
    <location>
        <begin position="92"/>
        <end position="99"/>
    </location>
</feature>
<feature type="turn" evidence="7">
    <location>
        <begin position="100"/>
        <end position="102"/>
    </location>
</feature>
<feature type="strand" evidence="7">
    <location>
        <begin position="109"/>
        <end position="116"/>
    </location>
</feature>
<feature type="strand" evidence="7">
    <location>
        <begin position="119"/>
        <end position="126"/>
    </location>
</feature>
<feature type="helix" evidence="7">
    <location>
        <begin position="127"/>
        <end position="129"/>
    </location>
</feature>
<feature type="helix" evidence="7">
    <location>
        <begin position="130"/>
        <end position="144"/>
    </location>
</feature>
<sequence>MERAIQGNDTREQANGERWDGGSGGITSPFKLPDESPSWTEWRLYNDETNSNQDNPLGFKESWGFGKVVFKRYLRYDRTEASLHRVLGSWTGDSVNYAASRFLGANQVGCTYSIRFRGVSVTISGGSRTLQHLCEMAIRSKQELLQLTPVEVESNVSRGCPEGIETFKKESE</sequence>